<sequence length="348" mass="39093">MNGTEGLNFYVPFSNKTGVVRSPFEYPQYYLAEPWQFSVLAAYMFLLIVLGFPINFLTLYVTVQHKKLRTPLNYILLNLAVANLFMVFGGFTTTLYTSLHAYFVFGPTGCNLEGFFATLGGEIALWSLVVLAIERYVVVCKPMSNFRFGENHAIMGLALTWIMAMACAAAPLVGWSRYIPEGMQCSCGIDYYTSRQEVNNESFVIYMFVVHFTIPLVIIFFCYGQLVFTVKEAAAQQQESATTQKAEKEVTRMVIIMVVAFLICWVPYASVAFYIFTHQGSDFGPIFMTIPSFFAKSSSIYNPVIYIMMNKQFRNCMLTTLCCGRNPLGDDEASTTASKTETSQVAPA</sequence>
<feature type="chain" id="PRO_0000197726" description="Rhodopsin">
    <location>
        <begin position="1"/>
        <end position="348"/>
    </location>
</feature>
<feature type="topological domain" description="Extracellular" evidence="7">
    <location>
        <begin position="1"/>
        <end position="36"/>
    </location>
</feature>
<feature type="transmembrane region" description="Helical; Name=1" evidence="5">
    <location>
        <begin position="37"/>
        <end position="61"/>
    </location>
</feature>
<feature type="topological domain" description="Cytoplasmic" evidence="7">
    <location>
        <begin position="62"/>
        <end position="73"/>
    </location>
</feature>
<feature type="transmembrane region" description="Helical; Name=2" evidence="5">
    <location>
        <begin position="74"/>
        <end position="99"/>
    </location>
</feature>
<feature type="topological domain" description="Extracellular" evidence="7">
    <location>
        <begin position="100"/>
        <end position="111"/>
    </location>
</feature>
<feature type="transmembrane region" description="Helical; Name=3" evidence="5">
    <location>
        <begin position="112"/>
        <end position="133"/>
    </location>
</feature>
<feature type="topological domain" description="Cytoplasmic" evidence="7">
    <location>
        <begin position="134"/>
        <end position="152"/>
    </location>
</feature>
<feature type="transmembrane region" description="Helical; Name=4" evidence="5">
    <location>
        <begin position="153"/>
        <end position="173"/>
    </location>
</feature>
<feature type="topological domain" description="Extracellular" evidence="7">
    <location>
        <begin position="174"/>
        <end position="202"/>
    </location>
</feature>
<feature type="transmembrane region" description="Helical; Name=5" evidence="5">
    <location>
        <begin position="203"/>
        <end position="227"/>
    </location>
</feature>
<feature type="topological domain" description="Cytoplasmic" evidence="7">
    <location>
        <begin position="228"/>
        <end position="252"/>
    </location>
</feature>
<feature type="transmembrane region" description="Helical; Name=6" evidence="5">
    <location>
        <begin position="253"/>
        <end position="274"/>
    </location>
</feature>
<feature type="topological domain" description="Extracellular" evidence="7">
    <location>
        <begin position="275"/>
        <end position="286"/>
    </location>
</feature>
<feature type="transmembrane region" description="Helical; Name=7" evidence="5">
    <location>
        <begin position="287"/>
        <end position="306"/>
    </location>
</feature>
<feature type="topological domain" description="Cytoplasmic" evidence="7">
    <location>
        <begin position="307"/>
        <end position="348"/>
    </location>
</feature>
<feature type="short sequence motif" description="'Ionic lock' involved in activated form stabilization" evidence="1">
    <location>
        <begin position="134"/>
        <end position="136"/>
    </location>
</feature>
<feature type="binding site" evidence="1">
    <location>
        <position position="201"/>
    </location>
    <ligand>
        <name>Zn(2+)</name>
        <dbReference type="ChEBI" id="CHEBI:29105"/>
    </ligand>
</feature>
<feature type="binding site" evidence="1">
    <location>
        <position position="279"/>
    </location>
    <ligand>
        <name>Zn(2+)</name>
        <dbReference type="ChEBI" id="CHEBI:29105"/>
    </ligand>
</feature>
<feature type="modified residue" description="N-acetylmethionine" evidence="1">
    <location>
        <position position="1"/>
    </location>
</feature>
<feature type="modified residue" description="N6-(retinylidene)lysine" evidence="1">
    <location>
        <position position="296"/>
    </location>
</feature>
<feature type="modified residue" description="Phosphoserine" evidence="2">
    <location>
        <position position="334"/>
    </location>
</feature>
<feature type="modified residue" description="Phosphothreonine" evidence="2">
    <location>
        <position position="335"/>
    </location>
</feature>
<feature type="modified residue" description="Phosphothreonine" evidence="2">
    <location>
        <position position="336"/>
    </location>
</feature>
<feature type="modified residue" description="Phosphoserine" evidence="2">
    <location>
        <position position="338"/>
    </location>
</feature>
<feature type="modified residue" description="Phosphothreonine" evidence="1">
    <location>
        <position position="340"/>
    </location>
</feature>
<feature type="modified residue" description="Phosphothreonine" evidence="1">
    <location>
        <position position="342"/>
    </location>
</feature>
<feature type="modified residue" description="Phosphoserine" evidence="1">
    <location>
        <position position="343"/>
    </location>
</feature>
<feature type="lipid moiety-binding region" description="S-palmitoyl cysteine" evidence="1">
    <location>
        <position position="322"/>
    </location>
</feature>
<feature type="lipid moiety-binding region" description="S-palmitoyl cysteine" evidence="1">
    <location>
        <position position="323"/>
    </location>
</feature>
<feature type="glycosylation site" description="N-linked (GlcNAc...) asparagine" evidence="1">
    <location>
        <position position="2"/>
    </location>
</feature>
<feature type="glycosylation site" description="N-linked (GlcNAc...) asparagine" evidence="1">
    <location>
        <position position="15"/>
    </location>
</feature>
<feature type="disulfide bond" evidence="6">
    <location>
        <begin position="110"/>
        <end position="187"/>
    </location>
</feature>
<keyword id="KW-0002">3D-structure</keyword>
<keyword id="KW-0007">Acetylation</keyword>
<keyword id="KW-0966">Cell projection</keyword>
<keyword id="KW-0157">Chromophore</keyword>
<keyword id="KW-1015">Disulfide bond</keyword>
<keyword id="KW-0297">G-protein coupled receptor</keyword>
<keyword id="KW-0325">Glycoprotein</keyword>
<keyword id="KW-0449">Lipoprotein</keyword>
<keyword id="KW-0472">Membrane</keyword>
<keyword id="KW-0479">Metal-binding</keyword>
<keyword id="KW-0564">Palmitate</keyword>
<keyword id="KW-0597">Phosphoprotein</keyword>
<keyword id="KW-0600">Photoreceptor protein</keyword>
<keyword id="KW-0675">Receptor</keyword>
<keyword id="KW-1185">Reference proteome</keyword>
<keyword id="KW-0681">Retinal protein</keyword>
<keyword id="KW-0716">Sensory transduction</keyword>
<keyword id="KW-0807">Transducer</keyword>
<keyword id="KW-0812">Transmembrane</keyword>
<keyword id="KW-1133">Transmembrane helix</keyword>
<keyword id="KW-0844">Vision</keyword>
<keyword id="KW-0862">Zinc</keyword>
<organism>
    <name type="scientific">Tursiops truncatus</name>
    <name type="common">Atlantic bottle-nosed dolphin</name>
    <name type="synonym">Delphinus truncatus</name>
    <dbReference type="NCBI Taxonomy" id="9739"/>
    <lineage>
        <taxon>Eukaryota</taxon>
        <taxon>Metazoa</taxon>
        <taxon>Chordata</taxon>
        <taxon>Craniata</taxon>
        <taxon>Vertebrata</taxon>
        <taxon>Euteleostomi</taxon>
        <taxon>Mammalia</taxon>
        <taxon>Eutheria</taxon>
        <taxon>Laurasiatheria</taxon>
        <taxon>Artiodactyla</taxon>
        <taxon>Whippomorpha</taxon>
        <taxon>Cetacea</taxon>
        <taxon>Odontoceti</taxon>
        <taxon>Delphinidae</taxon>
        <taxon>Tursiops</taxon>
    </lineage>
</organism>
<gene>
    <name type="primary">RHO</name>
</gene>
<protein>
    <recommendedName>
        <fullName>Rhodopsin</fullName>
    </recommendedName>
</protein>
<name>OPSD_TURTR</name>
<comment type="function">
    <text evidence="3 5">Photoreceptor required for image-forming vision at low light intensity. Light-induced isomerization of 11-cis to all-trans retinal triggers a conformational change that activates signaling via G-proteins. Signaling mediates the activation of phospholipase C (By similarity). Subsequent receptor phosphorylation mediates displacement of the bound G-protein alpha subunit by arrestin and terminates signaling (By similarity).</text>
</comment>
<comment type="subunit">
    <text evidence="1 3 4">Homodimer. May form a complex composed of RHO, GRK1 and RCVRN in a Ca(2+)-dependent manner; RCVRN prevents the interaction between GRK1 and RHO (By similarity). Interacts with GRK1 (By similarity). Interacts (phosphorylated form) with SAG (By similarity). Interacts with GNAT1 (By similarity). Interacts with GNAT3. SAG and G-proteins compete for a common binding site (By similarity). Interacts with PRCD; the interaction promotes PRCD stability (By similarity). Forms a complex with ASAP1 and ARF4. Forms a complex with ASAP1, RAB11A, Rabin8/RAB3IP, ARF4 and RAB11FIP3; the complex regulates Golgi-to-cilia rhodopsin/RHO transport in photoreceptors (By similarity).</text>
</comment>
<comment type="subcellular location">
    <subcellularLocation>
        <location evidence="1">Membrane</location>
        <topology evidence="1">Multi-pass membrane protein</topology>
    </subcellularLocation>
    <subcellularLocation>
        <location evidence="1">Cell projection</location>
        <location evidence="1">Cilium</location>
        <location evidence="1">Photoreceptor outer segment</location>
    </subcellularLocation>
    <text evidence="3">Synthesized in the inner segment (IS) of rod photoreceptor cells before vectorial transport to disk membranes in the rod outer segment (OS) photosensory cilia.</text>
</comment>
<comment type="PTM">
    <text evidence="1 5">Contains one covalently linked retinal chromophore. Upon light absorption, the covalently bound 11-cis-retinal is converted to all-trans-retinal (By similarity). After hydrolysis of the Schiff base and release of the covalently bound all-trans-retinal, active rhodopsin is regenerated by binding of a fresh molecule of 11-cis-retinal (By similarity).</text>
</comment>
<comment type="similarity">
    <text evidence="6">Belongs to the G-protein coupled receptor 1 family. Opsin subfamily.</text>
</comment>
<dbReference type="EMBL" id="AF055456">
    <property type="protein sequence ID" value="AAC12940.1"/>
    <property type="molecule type" value="mRNA"/>
</dbReference>
<dbReference type="RefSeq" id="NP_001267588.1">
    <property type="nucleotide sequence ID" value="NM_001280659.1"/>
</dbReference>
<dbReference type="PDB" id="1RY1">
    <property type="method" value="EM"/>
    <property type="resolution" value="12.00 A"/>
    <property type="chains" value="S=50-67"/>
</dbReference>
<dbReference type="PDB" id="2J28">
    <property type="method" value="EM"/>
    <property type="resolution" value="8.00 A"/>
    <property type="chains" value="7=50-67"/>
</dbReference>
<dbReference type="PDBsum" id="1RY1"/>
<dbReference type="PDBsum" id="2J28"/>
<dbReference type="SMR" id="O62798"/>
<dbReference type="FunCoup" id="O62798">
    <property type="interactions" value="98"/>
</dbReference>
<dbReference type="STRING" id="9739.ENSTTRP00000010688"/>
<dbReference type="GlyCosmos" id="O62798">
    <property type="glycosylation" value="2 sites, No reported glycans"/>
</dbReference>
<dbReference type="GeneID" id="101320374"/>
<dbReference type="CTD" id="6010"/>
<dbReference type="HOGENOM" id="CLU_009579_3_0_1"/>
<dbReference type="InParanoid" id="O62798"/>
<dbReference type="OrthoDB" id="5962323at2759"/>
<dbReference type="TreeFam" id="TF324998"/>
<dbReference type="EvolutionaryTrace" id="O62798"/>
<dbReference type="Proteomes" id="UP000245320">
    <property type="component" value="Chromosome 10"/>
</dbReference>
<dbReference type="GO" id="GO:0016020">
    <property type="term" value="C:membrane"/>
    <property type="evidence" value="ECO:0000250"/>
    <property type="project" value="UniProtKB"/>
</dbReference>
<dbReference type="GO" id="GO:0097381">
    <property type="term" value="C:photoreceptor disc membrane"/>
    <property type="evidence" value="ECO:0000250"/>
    <property type="project" value="UniProtKB"/>
</dbReference>
<dbReference type="GO" id="GO:0060342">
    <property type="term" value="C:photoreceptor inner segment membrane"/>
    <property type="evidence" value="ECO:0000250"/>
    <property type="project" value="UniProtKB"/>
</dbReference>
<dbReference type="GO" id="GO:0042622">
    <property type="term" value="C:photoreceptor outer segment membrane"/>
    <property type="evidence" value="ECO:0000250"/>
    <property type="project" value="UniProtKB"/>
</dbReference>
<dbReference type="GO" id="GO:0005886">
    <property type="term" value="C:plasma membrane"/>
    <property type="evidence" value="ECO:0000250"/>
    <property type="project" value="UniProtKB"/>
</dbReference>
<dbReference type="GO" id="GO:0005502">
    <property type="term" value="F:11-cis retinal binding"/>
    <property type="evidence" value="ECO:0000250"/>
    <property type="project" value="UniProtKB"/>
</dbReference>
<dbReference type="GO" id="GO:0008020">
    <property type="term" value="F:G protein-coupled photoreceptor activity"/>
    <property type="evidence" value="ECO:0000250"/>
    <property type="project" value="UniProtKB"/>
</dbReference>
<dbReference type="GO" id="GO:0046872">
    <property type="term" value="F:metal ion binding"/>
    <property type="evidence" value="ECO:0007669"/>
    <property type="project" value="UniProtKB-KW"/>
</dbReference>
<dbReference type="GO" id="GO:0016038">
    <property type="term" value="P:absorption of visible light"/>
    <property type="evidence" value="ECO:0000250"/>
    <property type="project" value="AgBase"/>
</dbReference>
<dbReference type="GO" id="GO:0016056">
    <property type="term" value="P:G protein-coupled opsin signaling pathway"/>
    <property type="evidence" value="ECO:0000250"/>
    <property type="project" value="UniProtKB"/>
</dbReference>
<dbReference type="GO" id="GO:0007601">
    <property type="term" value="P:visual perception"/>
    <property type="evidence" value="ECO:0007669"/>
    <property type="project" value="UniProtKB-KW"/>
</dbReference>
<dbReference type="CDD" id="cd15080">
    <property type="entry name" value="7tmA_MWS_opsin"/>
    <property type="match status" value="1"/>
</dbReference>
<dbReference type="FunFam" id="1.20.1070.10:FF:000018">
    <property type="entry name" value="Rhodopsin"/>
    <property type="match status" value="1"/>
</dbReference>
<dbReference type="Gene3D" id="1.20.1070.10">
    <property type="entry name" value="Rhodopsin 7-helix transmembrane proteins"/>
    <property type="match status" value="1"/>
</dbReference>
<dbReference type="InterPro" id="IPR050125">
    <property type="entry name" value="GPCR_opsins"/>
</dbReference>
<dbReference type="InterPro" id="IPR000276">
    <property type="entry name" value="GPCR_Rhodpsn"/>
</dbReference>
<dbReference type="InterPro" id="IPR017452">
    <property type="entry name" value="GPCR_Rhodpsn_7TM"/>
</dbReference>
<dbReference type="InterPro" id="IPR001760">
    <property type="entry name" value="Opsin"/>
</dbReference>
<dbReference type="InterPro" id="IPR027430">
    <property type="entry name" value="Retinal_BS"/>
</dbReference>
<dbReference type="InterPro" id="IPR000732">
    <property type="entry name" value="Rhodopsin"/>
</dbReference>
<dbReference type="InterPro" id="IPR019477">
    <property type="entry name" value="Rhodopsin_N"/>
</dbReference>
<dbReference type="PANTHER" id="PTHR24240">
    <property type="entry name" value="OPSIN"/>
    <property type="match status" value="1"/>
</dbReference>
<dbReference type="Pfam" id="PF00001">
    <property type="entry name" value="7tm_1"/>
    <property type="match status" value="1"/>
</dbReference>
<dbReference type="Pfam" id="PF10413">
    <property type="entry name" value="Rhodopsin_N"/>
    <property type="match status" value="1"/>
</dbReference>
<dbReference type="PRINTS" id="PR00237">
    <property type="entry name" value="GPCRRHODOPSN"/>
</dbReference>
<dbReference type="PRINTS" id="PR00238">
    <property type="entry name" value="OPSIN"/>
</dbReference>
<dbReference type="PRINTS" id="PR00579">
    <property type="entry name" value="RHODOPSIN"/>
</dbReference>
<dbReference type="SMART" id="SM01381">
    <property type="entry name" value="7TM_GPCR_Srsx"/>
    <property type="match status" value="1"/>
</dbReference>
<dbReference type="SUPFAM" id="SSF81321">
    <property type="entry name" value="Family A G protein-coupled receptor-like"/>
    <property type="match status" value="1"/>
</dbReference>
<dbReference type="PROSITE" id="PS00237">
    <property type="entry name" value="G_PROTEIN_RECEP_F1_1"/>
    <property type="match status" value="1"/>
</dbReference>
<dbReference type="PROSITE" id="PS50262">
    <property type="entry name" value="G_PROTEIN_RECEP_F1_2"/>
    <property type="match status" value="1"/>
</dbReference>
<dbReference type="PROSITE" id="PS00238">
    <property type="entry name" value="OPSIN"/>
    <property type="match status" value="1"/>
</dbReference>
<reference key="1">
    <citation type="journal article" date="1998" name="Biochemistry">
        <title>Mechanism of spectral tuning in the dolphin visual pigments.</title>
        <authorList>
            <person name="Fasick J.I."/>
            <person name="Robsinson P.R."/>
        </authorList>
    </citation>
    <scope>NUCLEOTIDE SEQUENCE [MRNA]</scope>
</reference>
<reference key="2">
    <citation type="journal article" date="2004" name="Nature">
        <title>Structure of the signal recognition particle interacting with the elongation-arrested ribosome.</title>
        <authorList>
            <person name="Halic M."/>
            <person name="Becker T."/>
            <person name="Pool M.R."/>
            <person name="Spahn C.M.T."/>
            <person name="Grassucci R.A."/>
            <person name="Frank J."/>
            <person name="Beckmann R."/>
        </authorList>
    </citation>
    <scope>STRUCTURE BY ELECTRON MICROSCOPY (12.00 ANGSTROMS) OF 50-67</scope>
</reference>
<evidence type="ECO:0000250" key="1">
    <source>
        <dbReference type="UniProtKB" id="P02699"/>
    </source>
</evidence>
<evidence type="ECO:0000250" key="2">
    <source>
        <dbReference type="UniProtKB" id="P02700"/>
    </source>
</evidence>
<evidence type="ECO:0000250" key="3">
    <source>
        <dbReference type="UniProtKB" id="P08100"/>
    </source>
</evidence>
<evidence type="ECO:0000250" key="4">
    <source>
        <dbReference type="UniProtKB" id="P15409"/>
    </source>
</evidence>
<evidence type="ECO:0000250" key="5">
    <source>
        <dbReference type="UniProtKB" id="P31356"/>
    </source>
</evidence>
<evidence type="ECO:0000255" key="6">
    <source>
        <dbReference type="PROSITE-ProRule" id="PRU00521"/>
    </source>
</evidence>
<evidence type="ECO:0000305" key="7"/>
<proteinExistence type="evidence at protein level"/>
<accession>O62798</accession>